<keyword id="KW-0002">3D-structure</keyword>
<keyword id="KW-0028">Amino-acid biosynthesis</keyword>
<keyword id="KW-0100">Branched-chain amino acid biosynthesis</keyword>
<keyword id="KW-0412">Isoleucine biosynthesis</keyword>
<keyword id="KW-0432">Leucine biosynthesis</keyword>
<keyword id="KW-0456">Lyase</keyword>
<keyword id="KW-1185">Reference proteome</keyword>
<accession>Q58673</accession>
<comment type="function">
    <text evidence="1">Enzyme with broad specificity that catalyzes reversible hydroxyacid isomerizations via dehydration/hydration reactions. Catalyzes the isomerization between 2-isopropylmalate and 3-isopropylmalate, via the formation of 2-isopropylmaleate, a step involved in leucine biosynthesis. Catalyzes the isomerization between 2-methylmalate and 3-methylmalate, via the formation of 2-methylmaleate (citraconate), a step involved in isoleucine biosynthesis. Also displays malease activity, i.e. catalyzes the hydration of maleate to form (R)-malate.</text>
</comment>
<comment type="catalytic activity">
    <reaction evidence="1">
        <text>(2R,3S)-3-isopropylmalate = (2S)-2-isopropylmalate</text>
        <dbReference type="Rhea" id="RHEA:32287"/>
        <dbReference type="ChEBI" id="CHEBI:1178"/>
        <dbReference type="ChEBI" id="CHEBI:35121"/>
        <dbReference type="EC" id="4.2.1.33"/>
    </reaction>
</comment>
<comment type="catalytic activity">
    <reaction evidence="1">
        <text>(3R)-citramalate = 2-methylmaleate + H2O</text>
        <dbReference type="Rhea" id="RHEA:22332"/>
        <dbReference type="ChEBI" id="CHEBI:15377"/>
        <dbReference type="ChEBI" id="CHEBI:30719"/>
        <dbReference type="ChEBI" id="CHEBI:30934"/>
        <dbReference type="EC" id="4.2.1.35"/>
    </reaction>
</comment>
<comment type="catalytic activity">
    <reaction evidence="1">
        <text>2-methylmaleate + H2O = (2R,3S)-3-methylmalate</text>
        <dbReference type="Rhea" id="RHEA:42424"/>
        <dbReference type="ChEBI" id="CHEBI:15377"/>
        <dbReference type="ChEBI" id="CHEBI:30719"/>
        <dbReference type="ChEBI" id="CHEBI:58511"/>
        <dbReference type="EC" id="4.2.1.35"/>
    </reaction>
</comment>
<comment type="catalytic activity">
    <reaction evidence="1">
        <text>(R)-malate = maleate + H2O</text>
        <dbReference type="Rhea" id="RHEA:23692"/>
        <dbReference type="ChEBI" id="CHEBI:15377"/>
        <dbReference type="ChEBI" id="CHEBI:15588"/>
        <dbReference type="ChEBI" id="CHEBI:30780"/>
        <dbReference type="EC" id="4.2.1.31"/>
    </reaction>
</comment>
<comment type="biophysicochemical properties">
    <kinetics>
        <KM evidence="1">80 uM for 2-methylmaleate</KM>
        <KM evidence="1">810 uM for (R)-2-methylmalate</KM>
        <KM evidence="1">1900 uM for racemic 2-isopropylmalate</KM>
        <KM evidence="1">39 uM for racemic 3-isopropylmalate</KM>
        <KM evidence="1">400 uM for maleate</KM>
        <Vmax evidence="1">15.0 umol/min/mg enzyme for 2-methylmaleate hydration reaction</Vmax>
        <Vmax evidence="1">1.5 umol/min/mg enzyme for (R)-2-methylmalate dehydration reaction</Vmax>
        <Vmax evidence="1">4.2 umol/min/mg enzyme for 2-isopropylmalate dehydration reaction</Vmax>
        <Vmax evidence="1">1.8 umol/min/mg enzyme for 3-isopropylmalate dehydration reaction</Vmax>
        <Vmax evidence="1">34.0 umol/min/mg enzyme for maleate hydration reaction</Vmax>
    </kinetics>
    <phDependence>
        <text evidence="1">Optimum pH is 7.5.</text>
    </phDependence>
    <temperatureDependence>
        <text evidence="1">Optimum temperature is 70 degrees Celsius.</text>
    </temperatureDependence>
</comment>
<comment type="pathway">
    <text>Amino-acid biosynthesis; L-leucine biosynthesis; L-leucine from 3-methyl-2-oxobutanoate: step 2/4.</text>
</comment>
<comment type="pathway">
    <text>Amino-acid biosynthesis; L-isoleucine biosynthesis; 2-oxobutanoate from pyruvate: step 2/3.</text>
</comment>
<comment type="subunit">
    <text evidence="1">Heterotetramer of 2 LeuC and 2 LeuD. The heterotetramer that can be formed in vitro between HacA and LeuD is inactive.</text>
</comment>
<comment type="similarity">
    <text evidence="2">Belongs to the LeuD family.</text>
</comment>
<protein>
    <recommendedName>
        <fullName>Isopropylmalate/citramalate isomerase small subunit</fullName>
        <ecNumber>4.2.1.33</ecNumber>
        <ecNumber>4.2.1.35</ecNumber>
    </recommendedName>
    <alternativeName>
        <fullName>(R)-2-methylmalate dehydratase</fullName>
    </alternativeName>
    <alternativeName>
        <fullName>(R)-citramalate dehydratase</fullName>
    </alternativeName>
    <alternativeName>
        <fullName>3-isopropylmalate dehydratase</fullName>
    </alternativeName>
    <alternativeName>
        <fullName>Alpha-isopropylmalate dehydratase</fullName>
    </alternativeName>
    <alternativeName>
        <fullName>Citraconate hydratase</fullName>
    </alternativeName>
    <alternativeName>
        <fullName>Isopropylmalate isomerase</fullName>
        <shortName>IPMI</shortName>
    </alternativeName>
    <alternativeName>
        <fullName>Maleate hydratase</fullName>
        <shortName>Malease</shortName>
        <ecNumber>4.2.1.31</ecNumber>
    </alternativeName>
</protein>
<proteinExistence type="evidence at protein level"/>
<dbReference type="EC" id="4.2.1.33"/>
<dbReference type="EC" id="4.2.1.35"/>
<dbReference type="EC" id="4.2.1.31"/>
<dbReference type="EMBL" id="L77117">
    <property type="protein sequence ID" value="AAB99283.1"/>
    <property type="molecule type" value="Genomic_DNA"/>
</dbReference>
<dbReference type="PIR" id="D64459">
    <property type="entry name" value="D64459"/>
</dbReference>
<dbReference type="RefSeq" id="WP_010870790.1">
    <property type="nucleotide sequence ID" value="NC_000909.1"/>
</dbReference>
<dbReference type="PDB" id="3VBA">
    <property type="method" value="X-ray"/>
    <property type="resolution" value="2.00 A"/>
    <property type="chains" value="A/B/C/D/E/F=1-168"/>
</dbReference>
<dbReference type="PDBsum" id="3VBA"/>
<dbReference type="SMR" id="Q58673"/>
<dbReference type="FunCoup" id="Q58673">
    <property type="interactions" value="97"/>
</dbReference>
<dbReference type="STRING" id="243232.MJ_1277"/>
<dbReference type="PaxDb" id="243232-MJ_1277"/>
<dbReference type="EnsemblBacteria" id="AAB99283">
    <property type="protein sequence ID" value="AAB99283"/>
    <property type="gene ID" value="MJ_1277"/>
</dbReference>
<dbReference type="GeneID" id="1452175"/>
<dbReference type="KEGG" id="mja:MJ_1277"/>
<dbReference type="eggNOG" id="arCOG02230">
    <property type="taxonomic scope" value="Archaea"/>
</dbReference>
<dbReference type="HOGENOM" id="CLU_081378_1_1_2"/>
<dbReference type="InParanoid" id="Q58673"/>
<dbReference type="OrthoDB" id="6505at2157"/>
<dbReference type="PhylomeDB" id="Q58673"/>
<dbReference type="BioCyc" id="MetaCyc:MONOMER-13648"/>
<dbReference type="BRENDA" id="4.2.1.33">
    <property type="organism ID" value="3260"/>
</dbReference>
<dbReference type="SABIO-RK" id="Q58673"/>
<dbReference type="UniPathway" id="UPA00047">
    <property type="reaction ID" value="UER00067"/>
</dbReference>
<dbReference type="UniPathway" id="UPA00048">
    <property type="reaction ID" value="UER00071"/>
</dbReference>
<dbReference type="EvolutionaryTrace" id="Q58673"/>
<dbReference type="Proteomes" id="UP000000805">
    <property type="component" value="Chromosome"/>
</dbReference>
<dbReference type="GO" id="GO:0047508">
    <property type="term" value="F:(R)-2-methylmalate dehydratase activity"/>
    <property type="evidence" value="ECO:0007669"/>
    <property type="project" value="UniProtKB-EC"/>
</dbReference>
<dbReference type="GO" id="GO:0003861">
    <property type="term" value="F:3-isopropylmalate dehydratase activity"/>
    <property type="evidence" value="ECO:0000315"/>
    <property type="project" value="CAFA"/>
</dbReference>
<dbReference type="GO" id="GO:0050075">
    <property type="term" value="F:maleate hydratase activity"/>
    <property type="evidence" value="ECO:0007669"/>
    <property type="project" value="UniProtKB-EC"/>
</dbReference>
<dbReference type="GO" id="GO:0009097">
    <property type="term" value="P:isoleucine biosynthetic process"/>
    <property type="evidence" value="ECO:0007669"/>
    <property type="project" value="UniProtKB-UniPathway"/>
</dbReference>
<dbReference type="GO" id="GO:0009098">
    <property type="term" value="P:L-leucine biosynthetic process"/>
    <property type="evidence" value="ECO:0007669"/>
    <property type="project" value="UniProtKB-UniRule"/>
</dbReference>
<dbReference type="CDD" id="cd01577">
    <property type="entry name" value="IPMI_Swivel"/>
    <property type="match status" value="1"/>
</dbReference>
<dbReference type="FunFam" id="3.20.19.10:FF:000007">
    <property type="entry name" value="Isopropylmalate/citramalate isomerase small subunit"/>
    <property type="match status" value="1"/>
</dbReference>
<dbReference type="Gene3D" id="3.20.19.10">
    <property type="entry name" value="Aconitase, domain 4"/>
    <property type="match status" value="1"/>
</dbReference>
<dbReference type="HAMAP" id="MF_01032">
    <property type="entry name" value="LeuD_type2"/>
    <property type="match status" value="1"/>
</dbReference>
<dbReference type="InterPro" id="IPR015928">
    <property type="entry name" value="Aconitase/3IPM_dehydase_swvl"/>
</dbReference>
<dbReference type="InterPro" id="IPR000573">
    <property type="entry name" value="AconitaseA/IPMdHydase_ssu_swvl"/>
</dbReference>
<dbReference type="InterPro" id="IPR033940">
    <property type="entry name" value="IPMI_Swivel"/>
</dbReference>
<dbReference type="InterPro" id="IPR050075">
    <property type="entry name" value="LeuD"/>
</dbReference>
<dbReference type="InterPro" id="IPR011827">
    <property type="entry name" value="LeuD_type2/HacB/DmdB"/>
</dbReference>
<dbReference type="NCBIfam" id="TIGR02087">
    <property type="entry name" value="LEUD_arch"/>
    <property type="match status" value="1"/>
</dbReference>
<dbReference type="PANTHER" id="PTHR43345:SF9">
    <property type="entry name" value="3-ISOPROPYLMALATE DEHYDRATASE SMALL SUBUNIT"/>
    <property type="match status" value="1"/>
</dbReference>
<dbReference type="PANTHER" id="PTHR43345">
    <property type="entry name" value="3-ISOPROPYLMALATE DEHYDRATASE SMALL SUBUNIT 2-RELATED-RELATED"/>
    <property type="match status" value="1"/>
</dbReference>
<dbReference type="Pfam" id="PF00694">
    <property type="entry name" value="Aconitase_C"/>
    <property type="match status" value="1"/>
</dbReference>
<dbReference type="SUPFAM" id="SSF52016">
    <property type="entry name" value="LeuD/IlvD-like"/>
    <property type="match status" value="1"/>
</dbReference>
<gene>
    <name type="primary">leuD</name>
    <name type="ordered locus">MJ1277</name>
</gene>
<evidence type="ECO:0000269" key="1">
    <source>
    </source>
</evidence>
<evidence type="ECO:0000305" key="2"/>
<evidence type="ECO:0007829" key="3">
    <source>
        <dbReference type="PDB" id="3VBA"/>
    </source>
</evidence>
<feature type="chain" id="PRO_0000141937" description="Isopropylmalate/citramalate isomerase small subunit">
    <location>
        <begin position="1"/>
        <end position="168"/>
    </location>
</feature>
<feature type="strand" evidence="3">
    <location>
        <begin position="3"/>
        <end position="11"/>
    </location>
</feature>
<feature type="helix" evidence="3">
    <location>
        <begin position="18"/>
        <end position="21"/>
    </location>
</feature>
<feature type="helix" evidence="3">
    <location>
        <begin position="24"/>
        <end position="26"/>
    </location>
</feature>
<feature type="helix" evidence="3">
    <location>
        <begin position="32"/>
        <end position="35"/>
    </location>
</feature>
<feature type="helix" evidence="3">
    <location>
        <begin position="36"/>
        <end position="38"/>
    </location>
</feature>
<feature type="turn" evidence="3">
    <location>
        <begin position="39"/>
        <end position="43"/>
    </location>
</feature>
<feature type="helix" evidence="3">
    <location>
        <begin position="47"/>
        <end position="50"/>
    </location>
</feature>
<feature type="strand" evidence="3">
    <location>
        <begin position="56"/>
        <end position="59"/>
    </location>
</feature>
<feature type="strand" evidence="3">
    <location>
        <begin position="65"/>
        <end position="67"/>
    </location>
</feature>
<feature type="helix" evidence="3">
    <location>
        <begin position="71"/>
        <end position="78"/>
    </location>
</feature>
<feature type="strand" evidence="3">
    <location>
        <begin position="83"/>
        <end position="87"/>
    </location>
</feature>
<feature type="helix" evidence="3">
    <location>
        <begin position="91"/>
        <end position="99"/>
    </location>
</feature>
<feature type="strand" evidence="3">
    <location>
        <begin position="104"/>
        <end position="106"/>
    </location>
</feature>
<feature type="helix" evidence="3">
    <location>
        <begin position="110"/>
        <end position="113"/>
    </location>
</feature>
<feature type="strand" evidence="3">
    <location>
        <begin position="119"/>
        <end position="123"/>
    </location>
</feature>
<feature type="turn" evidence="3">
    <location>
        <begin position="124"/>
        <end position="126"/>
    </location>
</feature>
<feature type="strand" evidence="3">
    <location>
        <begin position="128"/>
        <end position="131"/>
    </location>
</feature>
<feature type="turn" evidence="3">
    <location>
        <begin position="132"/>
        <end position="134"/>
    </location>
</feature>
<feature type="strand" evidence="3">
    <location>
        <begin position="137"/>
        <end position="139"/>
    </location>
</feature>
<feature type="helix" evidence="3">
    <location>
        <begin position="145"/>
        <end position="153"/>
    </location>
</feature>
<feature type="helix" evidence="3">
    <location>
        <begin position="156"/>
        <end position="165"/>
    </location>
</feature>
<name>LEUD_METJA</name>
<sequence length="168" mass="18377">MRSIIKGRVWKFGNNVDTDAILPARYLVYTKPEELAQFVMTGADPDFPKKVKPGDIIVGGKNFGCGSSREHAPLGLKGAGISCVIAESFARIFYRNAINVGLPLIECKGISEKVNEGDELEVNLETGEIKNLTTGEVLKGQKLPEFMMEILEAGGLMPYLKKKMAESQ</sequence>
<reference key="1">
    <citation type="journal article" date="1996" name="Science">
        <title>Complete genome sequence of the methanogenic archaeon, Methanococcus jannaschii.</title>
        <authorList>
            <person name="Bult C.J."/>
            <person name="White O."/>
            <person name="Olsen G.J."/>
            <person name="Zhou L."/>
            <person name="Fleischmann R.D."/>
            <person name="Sutton G.G."/>
            <person name="Blake J.A."/>
            <person name="FitzGerald L.M."/>
            <person name="Clayton R.A."/>
            <person name="Gocayne J.D."/>
            <person name="Kerlavage A.R."/>
            <person name="Dougherty B.A."/>
            <person name="Tomb J.-F."/>
            <person name="Adams M.D."/>
            <person name="Reich C.I."/>
            <person name="Overbeek R."/>
            <person name="Kirkness E.F."/>
            <person name="Weinstock K.G."/>
            <person name="Merrick J.M."/>
            <person name="Glodek A."/>
            <person name="Scott J.L."/>
            <person name="Geoghagen N.S.M."/>
            <person name="Weidman J.F."/>
            <person name="Fuhrmann J.L."/>
            <person name="Nguyen D."/>
            <person name="Utterback T.R."/>
            <person name="Kelley J.M."/>
            <person name="Peterson J.D."/>
            <person name="Sadow P.W."/>
            <person name="Hanna M.C."/>
            <person name="Cotton M.D."/>
            <person name="Roberts K.M."/>
            <person name="Hurst M.A."/>
            <person name="Kaine B.P."/>
            <person name="Borodovsky M."/>
            <person name="Klenk H.-P."/>
            <person name="Fraser C.M."/>
            <person name="Smith H.O."/>
            <person name="Woese C.R."/>
            <person name="Venter J.C."/>
        </authorList>
    </citation>
    <scope>NUCLEOTIDE SEQUENCE [LARGE SCALE GENOMIC DNA]</scope>
    <source>
        <strain>ATCC 43067 / DSM 2661 / JAL-1 / JCM 10045 / NBRC 100440</strain>
    </source>
</reference>
<reference key="2">
    <citation type="journal article" date="2007" name="J. Bacteriol.">
        <title>Enzymology and evolution of the pyruvate pathway to 2-oxobutyrate in Methanocaldococcus jannaschii.</title>
        <authorList>
            <person name="Drevland R.M."/>
            <person name="Waheed A."/>
            <person name="Graham D.E."/>
        </authorList>
    </citation>
    <scope>FUNCTION</scope>
    <scope>CATALYTIC ACTIVITY</scope>
    <scope>SUBSTRATE SPECIFICITY</scope>
    <scope>BIOPHYSICOCHEMICAL PROPERTIES</scope>
    <scope>SUBUNIT</scope>
    <source>
        <strain>ATCC 43067 / DSM 2661 / JAL-1 / JCM 10045 / NBRC 100440</strain>
    </source>
</reference>
<reference key="3">
    <citation type="journal article" date="2012" name="Biochem. Biophys. Res. Commun.">
        <title>Crystal structure of LeuD from Methanococcus jannaschii.</title>
        <authorList>
            <person name="Lee E.H."/>
            <person name="Cho Y.W."/>
            <person name="Hwang K.Y."/>
        </authorList>
    </citation>
    <scope>X-RAY CRYSTALLOGRAPHY (2.0 ANGSTROMS)</scope>
</reference>
<organism>
    <name type="scientific">Methanocaldococcus jannaschii (strain ATCC 43067 / DSM 2661 / JAL-1 / JCM 10045 / NBRC 100440)</name>
    <name type="common">Methanococcus jannaschii</name>
    <dbReference type="NCBI Taxonomy" id="243232"/>
    <lineage>
        <taxon>Archaea</taxon>
        <taxon>Methanobacteriati</taxon>
        <taxon>Methanobacteriota</taxon>
        <taxon>Methanomada group</taxon>
        <taxon>Methanococci</taxon>
        <taxon>Methanococcales</taxon>
        <taxon>Methanocaldococcaceae</taxon>
        <taxon>Methanocaldococcus</taxon>
    </lineage>
</organism>